<reference key="1">
    <citation type="journal article" date="2008" name="J. Bacteriol.">
        <title>The pangenome structure of Escherichia coli: comparative genomic analysis of E. coli commensal and pathogenic isolates.</title>
        <authorList>
            <person name="Rasko D.A."/>
            <person name="Rosovitz M.J."/>
            <person name="Myers G.S.A."/>
            <person name="Mongodin E.F."/>
            <person name="Fricke W.F."/>
            <person name="Gajer P."/>
            <person name="Crabtree J."/>
            <person name="Sebaihia M."/>
            <person name="Thomson N.R."/>
            <person name="Chaudhuri R."/>
            <person name="Henderson I.R."/>
            <person name="Sperandio V."/>
            <person name="Ravel J."/>
        </authorList>
    </citation>
    <scope>NUCLEOTIDE SEQUENCE [LARGE SCALE GENOMIC DNA]</scope>
    <source>
        <strain>E24377A / ETEC</strain>
    </source>
</reference>
<keyword id="KW-0997">Cell inner membrane</keyword>
<keyword id="KW-1003">Cell membrane</keyword>
<keyword id="KW-0472">Membrane</keyword>
<keyword id="KW-0520">NAD</keyword>
<keyword id="KW-0874">Quinone</keyword>
<keyword id="KW-1185">Reference proteome</keyword>
<keyword id="KW-1278">Translocase</keyword>
<keyword id="KW-0812">Transmembrane</keyword>
<keyword id="KW-1133">Transmembrane helix</keyword>
<keyword id="KW-0813">Transport</keyword>
<keyword id="KW-0830">Ubiquinone</keyword>
<name>NUOK_ECO24</name>
<sequence length="100" mass="10845">MIPLQHGLILAAILFVLGLTGLVIRRNLLFMLIGLEIMINASALAFVVAGSYWGQTDGQVMYILAISLAAAEASIGLALLLQLHRRRQNLNIDSVSEMRG</sequence>
<gene>
    <name evidence="1" type="primary">nuoK</name>
    <name type="ordered locus">EcE24377A_2572</name>
</gene>
<dbReference type="EC" id="7.1.1.-" evidence="1"/>
<dbReference type="EMBL" id="CP000800">
    <property type="protein sequence ID" value="ABV19524.1"/>
    <property type="molecule type" value="Genomic_DNA"/>
</dbReference>
<dbReference type="RefSeq" id="WP_000612644.1">
    <property type="nucleotide sequence ID" value="NC_009801.1"/>
</dbReference>
<dbReference type="SMR" id="A7ZP93"/>
<dbReference type="GeneID" id="93033872"/>
<dbReference type="KEGG" id="ecw:EcE24377A_2572"/>
<dbReference type="HOGENOM" id="CLU_144724_0_1_6"/>
<dbReference type="Proteomes" id="UP000001122">
    <property type="component" value="Chromosome"/>
</dbReference>
<dbReference type="GO" id="GO:0030964">
    <property type="term" value="C:NADH dehydrogenase complex"/>
    <property type="evidence" value="ECO:0007669"/>
    <property type="project" value="TreeGrafter"/>
</dbReference>
<dbReference type="GO" id="GO:0005886">
    <property type="term" value="C:plasma membrane"/>
    <property type="evidence" value="ECO:0007669"/>
    <property type="project" value="UniProtKB-SubCell"/>
</dbReference>
<dbReference type="GO" id="GO:0050136">
    <property type="term" value="F:NADH:ubiquinone reductase (non-electrogenic) activity"/>
    <property type="evidence" value="ECO:0007669"/>
    <property type="project" value="UniProtKB-UniRule"/>
</dbReference>
<dbReference type="GO" id="GO:0048038">
    <property type="term" value="F:quinone binding"/>
    <property type="evidence" value="ECO:0007669"/>
    <property type="project" value="UniProtKB-KW"/>
</dbReference>
<dbReference type="GO" id="GO:0042773">
    <property type="term" value="P:ATP synthesis coupled electron transport"/>
    <property type="evidence" value="ECO:0007669"/>
    <property type="project" value="InterPro"/>
</dbReference>
<dbReference type="FunFam" id="1.10.287.3510:FF:000001">
    <property type="entry name" value="NADH-quinone oxidoreductase subunit K"/>
    <property type="match status" value="1"/>
</dbReference>
<dbReference type="Gene3D" id="1.10.287.3510">
    <property type="match status" value="1"/>
</dbReference>
<dbReference type="HAMAP" id="MF_01456">
    <property type="entry name" value="NDH1_NuoK"/>
    <property type="match status" value="1"/>
</dbReference>
<dbReference type="InterPro" id="IPR001133">
    <property type="entry name" value="NADH_UbQ_OxRdtase_chain4L/K"/>
</dbReference>
<dbReference type="InterPro" id="IPR039428">
    <property type="entry name" value="NUOK/Mnh_C1-like"/>
</dbReference>
<dbReference type="NCBIfam" id="NF004319">
    <property type="entry name" value="PRK05715.1-1"/>
    <property type="match status" value="1"/>
</dbReference>
<dbReference type="NCBIfam" id="NF004320">
    <property type="entry name" value="PRK05715.1-2"/>
    <property type="match status" value="1"/>
</dbReference>
<dbReference type="PANTHER" id="PTHR11434:SF16">
    <property type="entry name" value="NADH-UBIQUINONE OXIDOREDUCTASE CHAIN 4L"/>
    <property type="match status" value="1"/>
</dbReference>
<dbReference type="PANTHER" id="PTHR11434">
    <property type="entry name" value="NADH-UBIQUINONE OXIDOREDUCTASE SUBUNIT ND4L"/>
    <property type="match status" value="1"/>
</dbReference>
<dbReference type="Pfam" id="PF00420">
    <property type="entry name" value="Oxidored_q2"/>
    <property type="match status" value="1"/>
</dbReference>
<comment type="function">
    <text evidence="1">NDH-1 shuttles electrons from NADH, via FMN and iron-sulfur (Fe-S) centers, to quinones in the respiratory chain. The immediate electron acceptor for the enzyme in this species is believed to be ubiquinone. Couples the redox reaction to proton translocation (for every two electrons transferred, four hydrogen ions are translocated across the cytoplasmic membrane), and thus conserves the redox energy in a proton gradient.</text>
</comment>
<comment type="catalytic activity">
    <reaction evidence="1">
        <text>a quinone + NADH + 5 H(+)(in) = a quinol + NAD(+) + 4 H(+)(out)</text>
        <dbReference type="Rhea" id="RHEA:57888"/>
        <dbReference type="ChEBI" id="CHEBI:15378"/>
        <dbReference type="ChEBI" id="CHEBI:24646"/>
        <dbReference type="ChEBI" id="CHEBI:57540"/>
        <dbReference type="ChEBI" id="CHEBI:57945"/>
        <dbReference type="ChEBI" id="CHEBI:132124"/>
    </reaction>
</comment>
<comment type="subunit">
    <text evidence="1">NDH-1 is composed of 13 different subunits. Subunits NuoA, H, J, K, L, M, N constitute the membrane sector of the complex.</text>
</comment>
<comment type="subcellular location">
    <subcellularLocation>
        <location evidence="1">Cell inner membrane</location>
        <topology evidence="1">Multi-pass membrane protein</topology>
    </subcellularLocation>
</comment>
<comment type="similarity">
    <text evidence="1">Belongs to the complex I subunit 4L family.</text>
</comment>
<feature type="chain" id="PRO_0000390050" description="NADH-quinone oxidoreductase subunit K">
    <location>
        <begin position="1"/>
        <end position="100"/>
    </location>
</feature>
<feature type="transmembrane region" description="Helical" evidence="1">
    <location>
        <begin position="4"/>
        <end position="24"/>
    </location>
</feature>
<feature type="transmembrane region" description="Helical" evidence="1">
    <location>
        <begin position="28"/>
        <end position="48"/>
    </location>
</feature>
<feature type="transmembrane region" description="Helical" evidence="1">
    <location>
        <begin position="60"/>
        <end position="80"/>
    </location>
</feature>
<protein>
    <recommendedName>
        <fullName evidence="1">NADH-quinone oxidoreductase subunit K</fullName>
        <ecNumber evidence="1">7.1.1.-</ecNumber>
    </recommendedName>
    <alternativeName>
        <fullName evidence="1">NADH dehydrogenase I subunit K</fullName>
    </alternativeName>
    <alternativeName>
        <fullName evidence="1">NDH-1 subunit K</fullName>
    </alternativeName>
</protein>
<organism>
    <name type="scientific">Escherichia coli O139:H28 (strain E24377A / ETEC)</name>
    <dbReference type="NCBI Taxonomy" id="331111"/>
    <lineage>
        <taxon>Bacteria</taxon>
        <taxon>Pseudomonadati</taxon>
        <taxon>Pseudomonadota</taxon>
        <taxon>Gammaproteobacteria</taxon>
        <taxon>Enterobacterales</taxon>
        <taxon>Enterobacteriaceae</taxon>
        <taxon>Escherichia</taxon>
    </lineage>
</organism>
<proteinExistence type="inferred from homology"/>
<accession>A7ZP93</accession>
<evidence type="ECO:0000255" key="1">
    <source>
        <dbReference type="HAMAP-Rule" id="MF_01456"/>
    </source>
</evidence>